<accession>Q1XDI0</accession>
<protein>
    <recommendedName>
        <fullName evidence="2">Small ribosomal subunit protein uS3c</fullName>
    </recommendedName>
    <alternativeName>
        <fullName>30S ribosomal protein S3, chloroplastic</fullName>
    </alternativeName>
</protein>
<keyword id="KW-0150">Chloroplast</keyword>
<keyword id="KW-0934">Plastid</keyword>
<keyword id="KW-0687">Ribonucleoprotein</keyword>
<keyword id="KW-0689">Ribosomal protein</keyword>
<keyword id="KW-0694">RNA-binding</keyword>
<keyword id="KW-0699">rRNA-binding</keyword>
<organism>
    <name type="scientific">Pyropia yezoensis</name>
    <name type="common">Susabi-nori</name>
    <name type="synonym">Porphyra yezoensis</name>
    <dbReference type="NCBI Taxonomy" id="2788"/>
    <lineage>
        <taxon>Eukaryota</taxon>
        <taxon>Rhodophyta</taxon>
        <taxon>Bangiophyceae</taxon>
        <taxon>Bangiales</taxon>
        <taxon>Bangiaceae</taxon>
        <taxon>Pyropia</taxon>
    </lineage>
</organism>
<feature type="chain" id="PRO_0000277002" description="Small ribosomal subunit protein uS3c">
    <location>
        <begin position="1"/>
        <end position="230"/>
    </location>
</feature>
<feature type="domain" description="KH type-2">
    <location>
        <begin position="39"/>
        <end position="109"/>
    </location>
</feature>
<name>RR3_PYRYE</name>
<gene>
    <name type="primary">rps3</name>
</gene>
<proteinExistence type="inferred from homology"/>
<geneLocation type="chloroplast"/>
<reference key="1">
    <citation type="submission" date="2006-09" db="EMBL/GenBank/DDBJ databases">
        <title>Cloning and analysis of the Porphyra yezoensis gene for rps3.</title>
        <authorList>
            <person name="Wang M.Q."/>
            <person name="Mao Y.X."/>
        </authorList>
    </citation>
    <scope>NUCLEOTIDE SEQUENCE [GENOMIC DNA]</scope>
    <source>
        <strain>Qingdao</strain>
    </source>
</reference>
<reference key="2">
    <citation type="submission" date="2003-11" db="EMBL/GenBank/DDBJ databases">
        <title>Whole genome sequence of Porphyra yezoensis chloroplast.</title>
        <authorList>
            <person name="Kunimoto M."/>
            <person name="Morishima K."/>
            <person name="Yoshikawa M."/>
            <person name="Fukuda S."/>
            <person name="Kobayashi T."/>
            <person name="Kobayashi M."/>
            <person name="Okazaki T."/>
            <person name="Ohara I."/>
            <person name="Nakayama I."/>
        </authorList>
    </citation>
    <scope>NUCLEOTIDE SEQUENCE [LARGE SCALE GENOMIC DNA]</scope>
    <source>
        <strain>U-51</strain>
    </source>
</reference>
<dbReference type="EMBL" id="DQ995190">
    <property type="protein sequence ID" value="ABJ91305.1"/>
    <property type="molecule type" value="Genomic_DNA"/>
</dbReference>
<dbReference type="EMBL" id="AP006715">
    <property type="protein sequence ID" value="BAE92431.1"/>
    <property type="molecule type" value="Genomic_DNA"/>
</dbReference>
<dbReference type="RefSeq" id="YP_536988.1">
    <property type="nucleotide sequence ID" value="NC_007932.1"/>
</dbReference>
<dbReference type="SMR" id="Q1XDI0"/>
<dbReference type="GeneID" id="3978850"/>
<dbReference type="GO" id="GO:0009507">
    <property type="term" value="C:chloroplast"/>
    <property type="evidence" value="ECO:0007669"/>
    <property type="project" value="UniProtKB-SubCell"/>
</dbReference>
<dbReference type="GO" id="GO:0022627">
    <property type="term" value="C:cytosolic small ribosomal subunit"/>
    <property type="evidence" value="ECO:0007669"/>
    <property type="project" value="TreeGrafter"/>
</dbReference>
<dbReference type="GO" id="GO:0019843">
    <property type="term" value="F:rRNA binding"/>
    <property type="evidence" value="ECO:0007669"/>
    <property type="project" value="UniProtKB-UniRule"/>
</dbReference>
<dbReference type="GO" id="GO:0003735">
    <property type="term" value="F:structural constituent of ribosome"/>
    <property type="evidence" value="ECO:0007669"/>
    <property type="project" value="InterPro"/>
</dbReference>
<dbReference type="GO" id="GO:0006412">
    <property type="term" value="P:translation"/>
    <property type="evidence" value="ECO:0007669"/>
    <property type="project" value="UniProtKB-UniRule"/>
</dbReference>
<dbReference type="CDD" id="cd02412">
    <property type="entry name" value="KH-II_30S_S3"/>
    <property type="match status" value="1"/>
</dbReference>
<dbReference type="FunFam" id="3.30.300.20:FF:000001">
    <property type="entry name" value="30S ribosomal protein S3"/>
    <property type="match status" value="1"/>
</dbReference>
<dbReference type="Gene3D" id="3.30.300.20">
    <property type="match status" value="1"/>
</dbReference>
<dbReference type="Gene3D" id="3.30.1140.32">
    <property type="entry name" value="Ribosomal protein S3, C-terminal domain"/>
    <property type="match status" value="1"/>
</dbReference>
<dbReference type="HAMAP" id="MF_01309_B">
    <property type="entry name" value="Ribosomal_uS3_B"/>
    <property type="match status" value="1"/>
</dbReference>
<dbReference type="InterPro" id="IPR004087">
    <property type="entry name" value="KH_dom"/>
</dbReference>
<dbReference type="InterPro" id="IPR015946">
    <property type="entry name" value="KH_dom-like_a/b"/>
</dbReference>
<dbReference type="InterPro" id="IPR004044">
    <property type="entry name" value="KH_dom_type_2"/>
</dbReference>
<dbReference type="InterPro" id="IPR009019">
    <property type="entry name" value="KH_sf_prok-type"/>
</dbReference>
<dbReference type="InterPro" id="IPR036419">
    <property type="entry name" value="Ribosomal_S3_C_sf"/>
</dbReference>
<dbReference type="InterPro" id="IPR005704">
    <property type="entry name" value="Ribosomal_uS3_bac-typ"/>
</dbReference>
<dbReference type="InterPro" id="IPR001351">
    <property type="entry name" value="Ribosomal_uS3_C"/>
</dbReference>
<dbReference type="InterPro" id="IPR018280">
    <property type="entry name" value="Ribosomal_uS3_CS"/>
</dbReference>
<dbReference type="NCBIfam" id="TIGR01009">
    <property type="entry name" value="rpsC_bact"/>
    <property type="match status" value="1"/>
</dbReference>
<dbReference type="PANTHER" id="PTHR11760">
    <property type="entry name" value="30S/40S RIBOSOMAL PROTEIN S3"/>
    <property type="match status" value="1"/>
</dbReference>
<dbReference type="PANTHER" id="PTHR11760:SF19">
    <property type="entry name" value="SMALL RIBOSOMAL SUBUNIT PROTEIN US3C"/>
    <property type="match status" value="1"/>
</dbReference>
<dbReference type="Pfam" id="PF07650">
    <property type="entry name" value="KH_2"/>
    <property type="match status" value="1"/>
</dbReference>
<dbReference type="Pfam" id="PF00189">
    <property type="entry name" value="Ribosomal_S3_C"/>
    <property type="match status" value="1"/>
</dbReference>
<dbReference type="SMART" id="SM00322">
    <property type="entry name" value="KH"/>
    <property type="match status" value="1"/>
</dbReference>
<dbReference type="SUPFAM" id="SSF54814">
    <property type="entry name" value="Prokaryotic type KH domain (KH-domain type II)"/>
    <property type="match status" value="1"/>
</dbReference>
<dbReference type="SUPFAM" id="SSF54821">
    <property type="entry name" value="Ribosomal protein S3 C-terminal domain"/>
    <property type="match status" value="1"/>
</dbReference>
<dbReference type="PROSITE" id="PS50823">
    <property type="entry name" value="KH_TYPE_2"/>
    <property type="match status" value="1"/>
</dbReference>
<dbReference type="PROSITE" id="PS00548">
    <property type="entry name" value="RIBOSOMAL_S3"/>
    <property type="match status" value="1"/>
</dbReference>
<comment type="subunit">
    <text evidence="1">Part of the 30S ribosomal subunit.</text>
</comment>
<comment type="subcellular location">
    <subcellularLocation>
        <location>Plastid</location>
        <location>Chloroplast</location>
    </subcellularLocation>
</comment>
<comment type="similarity">
    <text evidence="2">Belongs to the universal ribosomal protein uS3 family.</text>
</comment>
<evidence type="ECO:0000250" key="1"/>
<evidence type="ECO:0000305" key="2"/>
<sequence length="230" mass="25700">MGQKIHPLGFRIGITQKHRSSWFANSKDYPVLLQEDHKIRSFIHSKLSNASIAKIEINRKVDQVEILIATARPGIVLGKSGAGIESLRKSLSLILDPSKQLRVNVVEIADPDSEATLVAEFITQQLEKRVAFRRAVRQAVQRAQRANTQGVKIQVSGRLNGAEIARSEWVREGRVPLQTLRADIDYCHRQAHTTYGVLGVKVWLFKGEILPESKSLESAYNQETPDSTAS</sequence>